<accession>Q59058</accession>
<sequence>MNKLKLKNEKEVRIKFGEYKLTGFSSDNGNNLYKLFNLTLSKIRYRKAMLEHNFQLPKIKESHKPKEITEKIKENDIYFLELINEIKKDFKDFCSLDAGTLFELFMYYTLIEFFKENNIDAKVIRNLDVSYKGNIFTEIDLFVDVFGKNFIFECKNRHISSNAILKLYGIMKILNINFGVLASTKGFYGNLKKEDIFKEYNIYILDKLIEKEKNKIFKELKDIFNI</sequence>
<protein>
    <recommendedName>
        <fullName>Uncharacterized protein MJ1664</fullName>
    </recommendedName>
</protein>
<organism>
    <name type="scientific">Methanocaldococcus jannaschii (strain ATCC 43067 / DSM 2661 / JAL-1 / JCM 10045 / NBRC 100440)</name>
    <name type="common">Methanococcus jannaschii</name>
    <dbReference type="NCBI Taxonomy" id="243232"/>
    <lineage>
        <taxon>Archaea</taxon>
        <taxon>Methanobacteriati</taxon>
        <taxon>Methanobacteriota</taxon>
        <taxon>Methanomada group</taxon>
        <taxon>Methanococci</taxon>
        <taxon>Methanococcales</taxon>
        <taxon>Methanocaldococcaceae</taxon>
        <taxon>Methanocaldococcus</taxon>
    </lineage>
</organism>
<keyword id="KW-1185">Reference proteome</keyword>
<dbReference type="EMBL" id="L77117">
    <property type="protein sequence ID" value="AAB99682.1"/>
    <property type="molecule type" value="Genomic_DNA"/>
</dbReference>
<dbReference type="PIR" id="F64507">
    <property type="entry name" value="F64507"/>
</dbReference>
<dbReference type="RefSeq" id="WP_010871188.1">
    <property type="nucleotide sequence ID" value="NC_000909.1"/>
</dbReference>
<dbReference type="SMR" id="Q59058"/>
<dbReference type="STRING" id="243232.MJ_1664"/>
<dbReference type="PaxDb" id="243232-MJ_1664"/>
<dbReference type="EnsemblBacteria" id="AAB99682">
    <property type="protein sequence ID" value="AAB99682"/>
    <property type="gene ID" value="MJ_1664"/>
</dbReference>
<dbReference type="GeneID" id="1452573"/>
<dbReference type="KEGG" id="mja:MJ_1664"/>
<dbReference type="eggNOG" id="arCOG09628">
    <property type="taxonomic scope" value="Archaea"/>
</dbReference>
<dbReference type="HOGENOM" id="CLU_1222531_0_0_2"/>
<dbReference type="InParanoid" id="Q59058"/>
<dbReference type="OrthoDB" id="64335at2157"/>
<dbReference type="Proteomes" id="UP000000805">
    <property type="component" value="Chromosome"/>
</dbReference>
<dbReference type="InterPro" id="IPR011335">
    <property type="entry name" value="Restrct_endonuc-II-like"/>
</dbReference>
<dbReference type="SUPFAM" id="SSF52980">
    <property type="entry name" value="Restriction endonuclease-like"/>
    <property type="match status" value="1"/>
</dbReference>
<feature type="chain" id="PRO_0000107462" description="Uncharacterized protein MJ1664">
    <location>
        <begin position="1"/>
        <end position="226"/>
    </location>
</feature>
<proteinExistence type="predicted"/>
<reference key="1">
    <citation type="journal article" date="1996" name="Science">
        <title>Complete genome sequence of the methanogenic archaeon, Methanococcus jannaschii.</title>
        <authorList>
            <person name="Bult C.J."/>
            <person name="White O."/>
            <person name="Olsen G.J."/>
            <person name="Zhou L."/>
            <person name="Fleischmann R.D."/>
            <person name="Sutton G.G."/>
            <person name="Blake J.A."/>
            <person name="FitzGerald L.M."/>
            <person name="Clayton R.A."/>
            <person name="Gocayne J.D."/>
            <person name="Kerlavage A.R."/>
            <person name="Dougherty B.A."/>
            <person name="Tomb J.-F."/>
            <person name="Adams M.D."/>
            <person name="Reich C.I."/>
            <person name="Overbeek R."/>
            <person name="Kirkness E.F."/>
            <person name="Weinstock K.G."/>
            <person name="Merrick J.M."/>
            <person name="Glodek A."/>
            <person name="Scott J.L."/>
            <person name="Geoghagen N.S.M."/>
            <person name="Weidman J.F."/>
            <person name="Fuhrmann J.L."/>
            <person name="Nguyen D."/>
            <person name="Utterback T.R."/>
            <person name="Kelley J.M."/>
            <person name="Peterson J.D."/>
            <person name="Sadow P.W."/>
            <person name="Hanna M.C."/>
            <person name="Cotton M.D."/>
            <person name="Roberts K.M."/>
            <person name="Hurst M.A."/>
            <person name="Kaine B.P."/>
            <person name="Borodovsky M."/>
            <person name="Klenk H.-P."/>
            <person name="Fraser C.M."/>
            <person name="Smith H.O."/>
            <person name="Woese C.R."/>
            <person name="Venter J.C."/>
        </authorList>
    </citation>
    <scope>NUCLEOTIDE SEQUENCE [LARGE SCALE GENOMIC DNA]</scope>
    <source>
        <strain>ATCC 43067 / DSM 2661 / JAL-1 / JCM 10045 / NBRC 100440</strain>
    </source>
</reference>
<name>Y1664_METJA</name>
<gene>
    <name type="ordered locus">MJ1664</name>
</gene>